<proteinExistence type="inferred from homology"/>
<organism>
    <name type="scientific">Escherichia coli O81 (strain ED1a)</name>
    <dbReference type="NCBI Taxonomy" id="585397"/>
    <lineage>
        <taxon>Bacteria</taxon>
        <taxon>Pseudomonadati</taxon>
        <taxon>Pseudomonadota</taxon>
        <taxon>Gammaproteobacteria</taxon>
        <taxon>Enterobacterales</taxon>
        <taxon>Enterobacteriaceae</taxon>
        <taxon>Escherichia</taxon>
    </lineage>
</organism>
<sequence>MLKIFNTLTRQKEEFKPIHAGEVGMYVCGITVYDLCHIGHGRTFVAFDVVARYLRFLGYKLKYVRNITDIDDKIIKRANENGESFVALVDRMIAEMHKDFDALNILRPDMEPRATHHIAEIIELTEQLIAKGHAYVADNGDVMFDVPTDPTYGVLSRQDLDQLQAGARVDVVDDKRNPMDFVLWKMSKEGEPSWPSPWGAGRPGWHIECSAMNCKQLGNHFDIHGGGSDLMFPHHENEIAQSTCAHDGQYVNYWMHSGMVMVDREKMSKSLGNFFTVRDVLKYYDAETVRYFLMSGHYRSQLNYSEENLKQARAALERLYTALRGTDKTVAPAGGEAFEARFIEAMDDDFNTPEAYSVLFDMAREVNRLKAEDMAAANAMASHLRKLSAVLGLLEQEPEAFLQSGAQADDSEVAEIEALIQQRLDARKAKDWAAADAARDRLNEMGIVLEDGPQGTTWRRK</sequence>
<accession>B7MRI9</accession>
<evidence type="ECO:0000255" key="1">
    <source>
        <dbReference type="HAMAP-Rule" id="MF_00041"/>
    </source>
</evidence>
<dbReference type="EC" id="6.1.1.16" evidence="1"/>
<dbReference type="EMBL" id="CU928162">
    <property type="protein sequence ID" value="CAR06755.1"/>
    <property type="molecule type" value="Genomic_DNA"/>
</dbReference>
<dbReference type="RefSeq" id="WP_000912345.1">
    <property type="nucleotide sequence ID" value="NC_011745.1"/>
</dbReference>
<dbReference type="SMR" id="B7MRI9"/>
<dbReference type="GeneID" id="75204392"/>
<dbReference type="KEGG" id="ecq:ECED1_0546"/>
<dbReference type="HOGENOM" id="CLU_013528_0_1_6"/>
<dbReference type="Proteomes" id="UP000000748">
    <property type="component" value="Chromosome"/>
</dbReference>
<dbReference type="GO" id="GO:0005829">
    <property type="term" value="C:cytosol"/>
    <property type="evidence" value="ECO:0007669"/>
    <property type="project" value="TreeGrafter"/>
</dbReference>
<dbReference type="GO" id="GO:0005524">
    <property type="term" value="F:ATP binding"/>
    <property type="evidence" value="ECO:0007669"/>
    <property type="project" value="UniProtKB-UniRule"/>
</dbReference>
<dbReference type="GO" id="GO:0004817">
    <property type="term" value="F:cysteine-tRNA ligase activity"/>
    <property type="evidence" value="ECO:0007669"/>
    <property type="project" value="UniProtKB-UniRule"/>
</dbReference>
<dbReference type="GO" id="GO:0008270">
    <property type="term" value="F:zinc ion binding"/>
    <property type="evidence" value="ECO:0007669"/>
    <property type="project" value="UniProtKB-UniRule"/>
</dbReference>
<dbReference type="GO" id="GO:0006423">
    <property type="term" value="P:cysteinyl-tRNA aminoacylation"/>
    <property type="evidence" value="ECO:0007669"/>
    <property type="project" value="UniProtKB-UniRule"/>
</dbReference>
<dbReference type="CDD" id="cd07963">
    <property type="entry name" value="Anticodon_Ia_Cys"/>
    <property type="match status" value="1"/>
</dbReference>
<dbReference type="CDD" id="cd00672">
    <property type="entry name" value="CysRS_core"/>
    <property type="match status" value="1"/>
</dbReference>
<dbReference type="FunFam" id="1.20.120.1910:FF:000001">
    <property type="entry name" value="Cysteine--tRNA ligase"/>
    <property type="match status" value="1"/>
</dbReference>
<dbReference type="FunFam" id="3.40.50.620:FF:000009">
    <property type="entry name" value="Cysteine--tRNA ligase"/>
    <property type="match status" value="1"/>
</dbReference>
<dbReference type="Gene3D" id="1.20.120.1910">
    <property type="entry name" value="Cysteine-tRNA ligase, C-terminal anti-codon recognition domain"/>
    <property type="match status" value="1"/>
</dbReference>
<dbReference type="Gene3D" id="3.40.50.620">
    <property type="entry name" value="HUPs"/>
    <property type="match status" value="1"/>
</dbReference>
<dbReference type="HAMAP" id="MF_00041">
    <property type="entry name" value="Cys_tRNA_synth"/>
    <property type="match status" value="1"/>
</dbReference>
<dbReference type="InterPro" id="IPR015803">
    <property type="entry name" value="Cys-tRNA-ligase"/>
</dbReference>
<dbReference type="InterPro" id="IPR015273">
    <property type="entry name" value="Cys-tRNA-synt_Ia_DALR"/>
</dbReference>
<dbReference type="InterPro" id="IPR024909">
    <property type="entry name" value="Cys-tRNA/MSH_ligase"/>
</dbReference>
<dbReference type="InterPro" id="IPR056411">
    <property type="entry name" value="CysS_C"/>
</dbReference>
<dbReference type="InterPro" id="IPR014729">
    <property type="entry name" value="Rossmann-like_a/b/a_fold"/>
</dbReference>
<dbReference type="InterPro" id="IPR032678">
    <property type="entry name" value="tRNA-synt_1_cat_dom"/>
</dbReference>
<dbReference type="InterPro" id="IPR009080">
    <property type="entry name" value="tRNAsynth_Ia_anticodon-bd"/>
</dbReference>
<dbReference type="NCBIfam" id="TIGR00435">
    <property type="entry name" value="cysS"/>
    <property type="match status" value="1"/>
</dbReference>
<dbReference type="PANTHER" id="PTHR10890:SF3">
    <property type="entry name" value="CYSTEINE--TRNA LIGASE, CYTOPLASMIC"/>
    <property type="match status" value="1"/>
</dbReference>
<dbReference type="PANTHER" id="PTHR10890">
    <property type="entry name" value="CYSTEINYL-TRNA SYNTHETASE"/>
    <property type="match status" value="1"/>
</dbReference>
<dbReference type="Pfam" id="PF23493">
    <property type="entry name" value="CysS_C"/>
    <property type="match status" value="1"/>
</dbReference>
<dbReference type="Pfam" id="PF09190">
    <property type="entry name" value="DALR_2"/>
    <property type="match status" value="1"/>
</dbReference>
<dbReference type="Pfam" id="PF01406">
    <property type="entry name" value="tRNA-synt_1e"/>
    <property type="match status" value="1"/>
</dbReference>
<dbReference type="PRINTS" id="PR00983">
    <property type="entry name" value="TRNASYNTHCYS"/>
</dbReference>
<dbReference type="SMART" id="SM00840">
    <property type="entry name" value="DALR_2"/>
    <property type="match status" value="1"/>
</dbReference>
<dbReference type="SUPFAM" id="SSF47323">
    <property type="entry name" value="Anticodon-binding domain of a subclass of class I aminoacyl-tRNA synthetases"/>
    <property type="match status" value="1"/>
</dbReference>
<dbReference type="SUPFAM" id="SSF52374">
    <property type="entry name" value="Nucleotidylyl transferase"/>
    <property type="match status" value="1"/>
</dbReference>
<gene>
    <name evidence="1" type="primary">cysS</name>
    <name type="ordered locus">ECED1_0546</name>
</gene>
<protein>
    <recommendedName>
        <fullName evidence="1">Cysteine--tRNA ligase</fullName>
        <ecNumber evidence="1">6.1.1.16</ecNumber>
    </recommendedName>
    <alternativeName>
        <fullName evidence="1">Cysteinyl-tRNA synthetase</fullName>
        <shortName evidence="1">CysRS</shortName>
    </alternativeName>
</protein>
<reference key="1">
    <citation type="journal article" date="2009" name="PLoS Genet.">
        <title>Organised genome dynamics in the Escherichia coli species results in highly diverse adaptive paths.</title>
        <authorList>
            <person name="Touchon M."/>
            <person name="Hoede C."/>
            <person name="Tenaillon O."/>
            <person name="Barbe V."/>
            <person name="Baeriswyl S."/>
            <person name="Bidet P."/>
            <person name="Bingen E."/>
            <person name="Bonacorsi S."/>
            <person name="Bouchier C."/>
            <person name="Bouvet O."/>
            <person name="Calteau A."/>
            <person name="Chiapello H."/>
            <person name="Clermont O."/>
            <person name="Cruveiller S."/>
            <person name="Danchin A."/>
            <person name="Diard M."/>
            <person name="Dossat C."/>
            <person name="Karoui M.E."/>
            <person name="Frapy E."/>
            <person name="Garry L."/>
            <person name="Ghigo J.M."/>
            <person name="Gilles A.M."/>
            <person name="Johnson J."/>
            <person name="Le Bouguenec C."/>
            <person name="Lescat M."/>
            <person name="Mangenot S."/>
            <person name="Martinez-Jehanne V."/>
            <person name="Matic I."/>
            <person name="Nassif X."/>
            <person name="Oztas S."/>
            <person name="Petit M.A."/>
            <person name="Pichon C."/>
            <person name="Rouy Z."/>
            <person name="Ruf C.S."/>
            <person name="Schneider D."/>
            <person name="Tourret J."/>
            <person name="Vacherie B."/>
            <person name="Vallenet D."/>
            <person name="Medigue C."/>
            <person name="Rocha E.P.C."/>
            <person name="Denamur E."/>
        </authorList>
    </citation>
    <scope>NUCLEOTIDE SEQUENCE [LARGE SCALE GENOMIC DNA]</scope>
    <source>
        <strain>ED1a</strain>
    </source>
</reference>
<name>SYC_ECO81</name>
<comment type="catalytic activity">
    <reaction evidence="1">
        <text>tRNA(Cys) + L-cysteine + ATP = L-cysteinyl-tRNA(Cys) + AMP + diphosphate</text>
        <dbReference type="Rhea" id="RHEA:17773"/>
        <dbReference type="Rhea" id="RHEA-COMP:9661"/>
        <dbReference type="Rhea" id="RHEA-COMP:9679"/>
        <dbReference type="ChEBI" id="CHEBI:30616"/>
        <dbReference type="ChEBI" id="CHEBI:33019"/>
        <dbReference type="ChEBI" id="CHEBI:35235"/>
        <dbReference type="ChEBI" id="CHEBI:78442"/>
        <dbReference type="ChEBI" id="CHEBI:78517"/>
        <dbReference type="ChEBI" id="CHEBI:456215"/>
        <dbReference type="EC" id="6.1.1.16"/>
    </reaction>
</comment>
<comment type="cofactor">
    <cofactor evidence="1">
        <name>Zn(2+)</name>
        <dbReference type="ChEBI" id="CHEBI:29105"/>
    </cofactor>
    <text evidence="1">Binds 1 zinc ion per subunit.</text>
</comment>
<comment type="subunit">
    <text evidence="1">Monomer.</text>
</comment>
<comment type="subcellular location">
    <subcellularLocation>
        <location evidence="1">Cytoplasm</location>
    </subcellularLocation>
</comment>
<comment type="similarity">
    <text evidence="1">Belongs to the class-I aminoacyl-tRNA synthetase family.</text>
</comment>
<feature type="chain" id="PRO_1000199069" description="Cysteine--tRNA ligase">
    <location>
        <begin position="1"/>
        <end position="461"/>
    </location>
</feature>
<feature type="short sequence motif" description="'HIGH' region">
    <location>
        <begin position="30"/>
        <end position="40"/>
    </location>
</feature>
<feature type="short sequence motif" description="'KMSKS' region">
    <location>
        <begin position="266"/>
        <end position="270"/>
    </location>
</feature>
<feature type="binding site" evidence="1">
    <location>
        <position position="28"/>
    </location>
    <ligand>
        <name>Zn(2+)</name>
        <dbReference type="ChEBI" id="CHEBI:29105"/>
    </ligand>
</feature>
<feature type="binding site" evidence="1">
    <location>
        <position position="209"/>
    </location>
    <ligand>
        <name>Zn(2+)</name>
        <dbReference type="ChEBI" id="CHEBI:29105"/>
    </ligand>
</feature>
<feature type="binding site" evidence="1">
    <location>
        <position position="234"/>
    </location>
    <ligand>
        <name>Zn(2+)</name>
        <dbReference type="ChEBI" id="CHEBI:29105"/>
    </ligand>
</feature>
<feature type="binding site" evidence="1">
    <location>
        <position position="238"/>
    </location>
    <ligand>
        <name>Zn(2+)</name>
        <dbReference type="ChEBI" id="CHEBI:29105"/>
    </ligand>
</feature>
<feature type="binding site" evidence="1">
    <location>
        <position position="269"/>
    </location>
    <ligand>
        <name>ATP</name>
        <dbReference type="ChEBI" id="CHEBI:30616"/>
    </ligand>
</feature>
<keyword id="KW-0030">Aminoacyl-tRNA synthetase</keyword>
<keyword id="KW-0067">ATP-binding</keyword>
<keyword id="KW-0963">Cytoplasm</keyword>
<keyword id="KW-0436">Ligase</keyword>
<keyword id="KW-0479">Metal-binding</keyword>
<keyword id="KW-0547">Nucleotide-binding</keyword>
<keyword id="KW-0648">Protein biosynthesis</keyword>
<keyword id="KW-0862">Zinc</keyword>